<sequence length="315" mass="34778">MKWSEVCVHTTQEAIEAVSNILHEAGASGVVIEDVEDFEMMSHREDNFGEIWDEKKRDEYPDSGVLVKAYLAESSDLTDTIKGIERDIQMLTKFGLTIGAGTVTLTQVDEEDWAHSWKQFYKPVKISRHLTVVPMWEEYTPQPDEKIIELDPGMAFGTGTHPTTVLCIQAIENYLQDNDRVVDVGTGSGVLAIAAAKLGAKDVFALDLDEVAVRSATDNVALNKVSQQVTVRQGDLMKELKEPVELIVANILAEVILLFVNDAYELTLPGGHFIASGIIGQKKEMVRDAMVAAGFTIVETTKLEDWVAIIAKREA</sequence>
<evidence type="ECO:0000255" key="1">
    <source>
        <dbReference type="HAMAP-Rule" id="MF_00735"/>
    </source>
</evidence>
<comment type="function">
    <text evidence="1">Methylates ribosomal protein L11.</text>
</comment>
<comment type="catalytic activity">
    <reaction evidence="1">
        <text>L-lysyl-[protein] + 3 S-adenosyl-L-methionine = N(6),N(6),N(6)-trimethyl-L-lysyl-[protein] + 3 S-adenosyl-L-homocysteine + 3 H(+)</text>
        <dbReference type="Rhea" id="RHEA:54192"/>
        <dbReference type="Rhea" id="RHEA-COMP:9752"/>
        <dbReference type="Rhea" id="RHEA-COMP:13826"/>
        <dbReference type="ChEBI" id="CHEBI:15378"/>
        <dbReference type="ChEBI" id="CHEBI:29969"/>
        <dbReference type="ChEBI" id="CHEBI:57856"/>
        <dbReference type="ChEBI" id="CHEBI:59789"/>
        <dbReference type="ChEBI" id="CHEBI:61961"/>
    </reaction>
</comment>
<comment type="subcellular location">
    <subcellularLocation>
        <location evidence="1">Cytoplasm</location>
    </subcellularLocation>
</comment>
<comment type="similarity">
    <text evidence="1">Belongs to the methyltransferase superfamily. PrmA family.</text>
</comment>
<dbReference type="EC" id="2.1.1.-" evidence="1"/>
<dbReference type="EMBL" id="CP001022">
    <property type="protein sequence ID" value="ACB60264.1"/>
    <property type="molecule type" value="Genomic_DNA"/>
</dbReference>
<dbReference type="RefSeq" id="WP_012369688.1">
    <property type="nucleotide sequence ID" value="NC_010556.1"/>
</dbReference>
<dbReference type="SMR" id="B1YKT1"/>
<dbReference type="STRING" id="262543.Exig_0783"/>
<dbReference type="KEGG" id="esi:Exig_0783"/>
<dbReference type="eggNOG" id="COG2264">
    <property type="taxonomic scope" value="Bacteria"/>
</dbReference>
<dbReference type="HOGENOM" id="CLU_049382_0_1_9"/>
<dbReference type="OrthoDB" id="9785995at2"/>
<dbReference type="Proteomes" id="UP000001681">
    <property type="component" value="Chromosome"/>
</dbReference>
<dbReference type="GO" id="GO:0005737">
    <property type="term" value="C:cytoplasm"/>
    <property type="evidence" value="ECO:0007669"/>
    <property type="project" value="UniProtKB-SubCell"/>
</dbReference>
<dbReference type="GO" id="GO:0016279">
    <property type="term" value="F:protein-lysine N-methyltransferase activity"/>
    <property type="evidence" value="ECO:0007669"/>
    <property type="project" value="RHEA"/>
</dbReference>
<dbReference type="GO" id="GO:0032259">
    <property type="term" value="P:methylation"/>
    <property type="evidence" value="ECO:0007669"/>
    <property type="project" value="UniProtKB-KW"/>
</dbReference>
<dbReference type="CDD" id="cd02440">
    <property type="entry name" value="AdoMet_MTases"/>
    <property type="match status" value="1"/>
</dbReference>
<dbReference type="Gene3D" id="3.40.50.150">
    <property type="entry name" value="Vaccinia Virus protein VP39"/>
    <property type="match status" value="1"/>
</dbReference>
<dbReference type="HAMAP" id="MF_00735">
    <property type="entry name" value="Methyltr_PrmA"/>
    <property type="match status" value="1"/>
</dbReference>
<dbReference type="InterPro" id="IPR050078">
    <property type="entry name" value="Ribosomal_L11_MeTrfase_PrmA"/>
</dbReference>
<dbReference type="InterPro" id="IPR004498">
    <property type="entry name" value="Ribosomal_PrmA_MeTrfase"/>
</dbReference>
<dbReference type="InterPro" id="IPR029063">
    <property type="entry name" value="SAM-dependent_MTases_sf"/>
</dbReference>
<dbReference type="NCBIfam" id="TIGR00406">
    <property type="entry name" value="prmA"/>
    <property type="match status" value="1"/>
</dbReference>
<dbReference type="PANTHER" id="PTHR43648">
    <property type="entry name" value="ELECTRON TRANSFER FLAVOPROTEIN BETA SUBUNIT LYSINE METHYLTRANSFERASE"/>
    <property type="match status" value="1"/>
</dbReference>
<dbReference type="PANTHER" id="PTHR43648:SF1">
    <property type="entry name" value="ELECTRON TRANSFER FLAVOPROTEIN BETA SUBUNIT LYSINE METHYLTRANSFERASE"/>
    <property type="match status" value="1"/>
</dbReference>
<dbReference type="Pfam" id="PF06325">
    <property type="entry name" value="PrmA"/>
    <property type="match status" value="1"/>
</dbReference>
<dbReference type="PIRSF" id="PIRSF000401">
    <property type="entry name" value="RPL11_MTase"/>
    <property type="match status" value="1"/>
</dbReference>
<dbReference type="SUPFAM" id="SSF53335">
    <property type="entry name" value="S-adenosyl-L-methionine-dependent methyltransferases"/>
    <property type="match status" value="1"/>
</dbReference>
<accession>B1YKT1</accession>
<proteinExistence type="inferred from homology"/>
<keyword id="KW-0963">Cytoplasm</keyword>
<keyword id="KW-0489">Methyltransferase</keyword>
<keyword id="KW-1185">Reference proteome</keyword>
<keyword id="KW-0949">S-adenosyl-L-methionine</keyword>
<keyword id="KW-0808">Transferase</keyword>
<feature type="chain" id="PRO_1000132798" description="Ribosomal protein L11 methyltransferase">
    <location>
        <begin position="1"/>
        <end position="315"/>
    </location>
</feature>
<feature type="binding site" evidence="1">
    <location>
        <position position="164"/>
    </location>
    <ligand>
        <name>S-adenosyl-L-methionine</name>
        <dbReference type="ChEBI" id="CHEBI:59789"/>
    </ligand>
</feature>
<feature type="binding site" evidence="1">
    <location>
        <position position="185"/>
    </location>
    <ligand>
        <name>S-adenosyl-L-methionine</name>
        <dbReference type="ChEBI" id="CHEBI:59789"/>
    </ligand>
</feature>
<feature type="binding site" evidence="1">
    <location>
        <position position="207"/>
    </location>
    <ligand>
        <name>S-adenosyl-L-methionine</name>
        <dbReference type="ChEBI" id="CHEBI:59789"/>
    </ligand>
</feature>
<feature type="binding site" evidence="1">
    <location>
        <position position="250"/>
    </location>
    <ligand>
        <name>S-adenosyl-L-methionine</name>
        <dbReference type="ChEBI" id="CHEBI:59789"/>
    </ligand>
</feature>
<reference key="1">
    <citation type="submission" date="2008-04" db="EMBL/GenBank/DDBJ databases">
        <title>Complete sequence of chromosome of Exiguobacterium sibiricum 255-15.</title>
        <authorList>
            <consortium name="US DOE Joint Genome Institute"/>
            <person name="Copeland A."/>
            <person name="Lucas S."/>
            <person name="Lapidus A."/>
            <person name="Glavina del Rio T."/>
            <person name="Dalin E."/>
            <person name="Tice H."/>
            <person name="Bruce D."/>
            <person name="Goodwin L."/>
            <person name="Pitluck S."/>
            <person name="Kiss H."/>
            <person name="Chertkov O."/>
            <person name="Monk C."/>
            <person name="Brettin T."/>
            <person name="Detter J.C."/>
            <person name="Han C."/>
            <person name="Kuske C.R."/>
            <person name="Schmutz J."/>
            <person name="Larimer F."/>
            <person name="Land M."/>
            <person name="Hauser L."/>
            <person name="Kyrpides N."/>
            <person name="Mikhailova N."/>
            <person name="Vishnivetskaya T."/>
            <person name="Rodrigues D.F."/>
            <person name="Gilichinsky D."/>
            <person name="Tiedje J."/>
            <person name="Richardson P."/>
        </authorList>
    </citation>
    <scope>NUCLEOTIDE SEQUENCE [LARGE SCALE GENOMIC DNA]</scope>
    <source>
        <strain>DSM 17290 / CCUG 55495 / CIP 109462 / JCM 13490 / 255-15</strain>
    </source>
</reference>
<gene>
    <name evidence="1" type="primary">prmA</name>
    <name type="ordered locus">Exig_0783</name>
</gene>
<organism>
    <name type="scientific">Exiguobacterium sibiricum (strain DSM 17290 / CCUG 55495 / CIP 109462 / JCM 13490 / 255-15)</name>
    <dbReference type="NCBI Taxonomy" id="262543"/>
    <lineage>
        <taxon>Bacteria</taxon>
        <taxon>Bacillati</taxon>
        <taxon>Bacillota</taxon>
        <taxon>Bacilli</taxon>
        <taxon>Bacillales</taxon>
        <taxon>Bacillales Family XII. Incertae Sedis</taxon>
        <taxon>Exiguobacterium</taxon>
    </lineage>
</organism>
<name>PRMA_EXIS2</name>
<protein>
    <recommendedName>
        <fullName evidence="1">Ribosomal protein L11 methyltransferase</fullName>
        <shortName evidence="1">L11 Mtase</shortName>
        <ecNumber evidence="1">2.1.1.-</ecNumber>
    </recommendedName>
</protein>